<comment type="function">
    <text evidence="4">Involved in the synthesis of catecholamines, such as dopamine. Has a role in serotonin signaling. Required for normal explorative and foraging behavior (By similarity).</text>
</comment>
<comment type="catalytic activity">
    <reaction>
        <text>(6R)-L-erythro-5,6,7,8-tetrahydrobiopterin + L-tyrosine + O2 = (4aS,6R)-4a-hydroxy-L-erythro-5,6,7,8-tetrahydrobiopterin + L-dopa</text>
        <dbReference type="Rhea" id="RHEA:18201"/>
        <dbReference type="ChEBI" id="CHEBI:15379"/>
        <dbReference type="ChEBI" id="CHEBI:15642"/>
        <dbReference type="ChEBI" id="CHEBI:57504"/>
        <dbReference type="ChEBI" id="CHEBI:58315"/>
        <dbReference type="ChEBI" id="CHEBI:59560"/>
        <dbReference type="EC" id="1.14.16.2"/>
    </reaction>
</comment>
<comment type="cofactor">
    <cofactor evidence="4">
        <name>Fe(2+)</name>
        <dbReference type="ChEBI" id="CHEBI:29033"/>
    </cofactor>
</comment>
<comment type="activity regulation">
    <text evidence="2">Phosphorylation leads to an increase in the catalytic activity.</text>
</comment>
<comment type="pathway">
    <text evidence="4">Catecholamine biosynthesis; dopamine biosynthesis; dopamine from L-tyrosine: step 1/2.</text>
</comment>
<comment type="subcellular location">
    <subcellularLocation>
        <location evidence="3">Cytoplasm</location>
        <location evidence="3">Perinuclear region</location>
    </subcellularLocation>
    <subcellularLocation>
        <location evidence="3">Cell projection</location>
        <location evidence="3">Axon</location>
    </subcellularLocation>
    <text evidence="3">Expressed in dopaminergic axons and axon terminals.</text>
</comment>
<comment type="similarity">
    <text evidence="5">Belongs to the biopterin-dependent aromatic amino acid hydroxylase family.</text>
</comment>
<protein>
    <recommendedName>
        <fullName evidence="4">Tyrosine 3-monooxygenase</fullName>
        <ecNumber evidence="4">1.14.16.2</ecNumber>
    </recommendedName>
    <alternativeName>
        <fullName evidence="4">Abnormal catecholamine distribution protein 2</fullName>
    </alternativeName>
    <alternativeName>
        <fullName evidence="4">Tyrosine 3-hydroxylase</fullName>
    </alternativeName>
</protein>
<sequence>MSSLTNPTTVMEEEEVPVAAPIRRGNKNPRRYSLVHQASCETQHHIGIRRQNTIQHRKQLTDQMREQKILQQLNDEGVEVIFAANDVSSIDFSVIVTSTDYISTFVSDILYNMKSAGVQICHVETRESKAVSGHDVLLDCRATKNQLIKAAELLTQNHVALTHFSIFSKKSVEKSQSMIWFPRHISELDQCSKCITKYEPTTDPRHPGHGDDEYIARRKFLNDQALEFKFGDEIGYVEYTEDEHATWKAVYEKLGGLHESHTCSVYRQNLKILQKEKVLTADRIPQIRDVNKFLQKKTGFELRPCSGLLSARDFLASLAFRVFQTTTYLRHHKSPHHSPEPDLIHELLGHVPMFSDPLLAQMSQDIGLMSLGASDEHIEKLATVYWFIVEFGLCKEDGKLKAIGAGLLSAYGELIHACSDAPEHKDFDPAVTAIQKYEDDDYQPLYFVADSIHDALAKLRKYASSMDRPFSVVYDPFTKSIETIQSSADLEKAFSRLSNDLSAITHAADRMKISITA</sequence>
<gene>
    <name type="primary">cat-2</name>
    <name type="ORF">CBG07026</name>
</gene>
<evidence type="ECO:0000250" key="1">
    <source>
        <dbReference type="UniProtKB" id="P04177"/>
    </source>
</evidence>
<evidence type="ECO:0000250" key="2">
    <source>
        <dbReference type="UniProtKB" id="P07101"/>
    </source>
</evidence>
<evidence type="ECO:0000250" key="3">
    <source>
        <dbReference type="UniProtKB" id="P24529"/>
    </source>
</evidence>
<evidence type="ECO:0000250" key="4">
    <source>
        <dbReference type="UniProtKB" id="P90986"/>
    </source>
</evidence>
<evidence type="ECO:0000255" key="5"/>
<evidence type="ECO:0000312" key="6">
    <source>
        <dbReference type="EMBL" id="CAP27318.1"/>
    </source>
</evidence>
<accession>A8X3V8</accession>
<name>TY3H_CAEBR</name>
<organism>
    <name type="scientific">Caenorhabditis briggsae</name>
    <dbReference type="NCBI Taxonomy" id="6238"/>
    <lineage>
        <taxon>Eukaryota</taxon>
        <taxon>Metazoa</taxon>
        <taxon>Ecdysozoa</taxon>
        <taxon>Nematoda</taxon>
        <taxon>Chromadorea</taxon>
        <taxon>Rhabditida</taxon>
        <taxon>Rhabditina</taxon>
        <taxon>Rhabditomorpha</taxon>
        <taxon>Rhabditoidea</taxon>
        <taxon>Rhabditidae</taxon>
        <taxon>Peloderinae</taxon>
        <taxon>Caenorhabditis</taxon>
    </lineage>
</organism>
<reference evidence="6" key="1">
    <citation type="journal article" date="2003" name="PLoS Biol.">
        <title>The genome sequence of Caenorhabditis briggsae: a platform for comparative genomics.</title>
        <authorList>
            <person name="Stein L.D."/>
            <person name="Bao Z."/>
            <person name="Blasiar D."/>
            <person name="Blumenthal T."/>
            <person name="Brent M.R."/>
            <person name="Chen N."/>
            <person name="Chinwalla A."/>
            <person name="Clarke L."/>
            <person name="Clee C."/>
            <person name="Coghlan A."/>
            <person name="Coulson A."/>
            <person name="D'Eustachio P."/>
            <person name="Fitch D.H.A."/>
            <person name="Fulton L.A."/>
            <person name="Fulton R.E."/>
            <person name="Griffiths-Jones S."/>
            <person name="Harris T.W."/>
            <person name="Hillier L.W."/>
            <person name="Kamath R."/>
            <person name="Kuwabara P.E."/>
            <person name="Mardis E.R."/>
            <person name="Marra M.A."/>
            <person name="Miner T.L."/>
            <person name="Minx P."/>
            <person name="Mullikin J.C."/>
            <person name="Plumb R.W."/>
            <person name="Rogers J."/>
            <person name="Schein J.E."/>
            <person name="Sohrmann M."/>
            <person name="Spieth J."/>
            <person name="Stajich J.E."/>
            <person name="Wei C."/>
            <person name="Willey D."/>
            <person name="Wilson R.K."/>
            <person name="Durbin R.M."/>
            <person name="Waterston R.H."/>
        </authorList>
    </citation>
    <scope>NUCLEOTIDE SEQUENCE [LARGE SCALE GENOMIC DNA]</scope>
    <source>
        <strain>AF16</strain>
    </source>
</reference>
<keyword id="KW-0085">Behavior</keyword>
<keyword id="KW-0127">Catecholamine biosynthesis</keyword>
<keyword id="KW-0966">Cell projection</keyword>
<keyword id="KW-0963">Cytoplasm</keyword>
<keyword id="KW-0408">Iron</keyword>
<keyword id="KW-0479">Metal-binding</keyword>
<keyword id="KW-0503">Monooxygenase</keyword>
<keyword id="KW-0530">Neurotransmitter biosynthesis</keyword>
<keyword id="KW-0560">Oxidoreductase</keyword>
<keyword id="KW-0597">Phosphoprotein</keyword>
<keyword id="KW-1185">Reference proteome</keyword>
<dbReference type="EC" id="1.14.16.2" evidence="4"/>
<dbReference type="EMBL" id="HE600960">
    <property type="protein sequence ID" value="CAP27318.1"/>
    <property type="molecule type" value="Genomic_DNA"/>
</dbReference>
<dbReference type="SMR" id="A8X3V8"/>
<dbReference type="FunCoup" id="A8X3V8">
    <property type="interactions" value="47"/>
</dbReference>
<dbReference type="STRING" id="6238.A8X3V8"/>
<dbReference type="EnsemblMetazoa" id="CBG07026.1">
    <property type="protein sequence ID" value="CBG07026.1"/>
    <property type="gene ID" value="WBGene00029201"/>
</dbReference>
<dbReference type="KEGG" id="cbr:CBG_07026"/>
<dbReference type="CTD" id="8574165"/>
<dbReference type="WormBase" id="CBG07026">
    <property type="protein sequence ID" value="CBP21828"/>
    <property type="gene ID" value="WBGene00029201"/>
    <property type="gene designation" value="Cbr-cat-2"/>
</dbReference>
<dbReference type="eggNOG" id="KOG3820">
    <property type="taxonomic scope" value="Eukaryota"/>
</dbReference>
<dbReference type="HOGENOM" id="CLU_023198_0_1_1"/>
<dbReference type="InParanoid" id="A8X3V8"/>
<dbReference type="OMA" id="SVEHGYP"/>
<dbReference type="UniPathway" id="UPA00747">
    <property type="reaction ID" value="UER00733"/>
</dbReference>
<dbReference type="Proteomes" id="UP000008549">
    <property type="component" value="Unassembled WGS sequence"/>
</dbReference>
<dbReference type="GO" id="GO:0030424">
    <property type="term" value="C:axon"/>
    <property type="evidence" value="ECO:0000318"/>
    <property type="project" value="GO_Central"/>
</dbReference>
<dbReference type="GO" id="GO:0005737">
    <property type="term" value="C:cytoplasm"/>
    <property type="evidence" value="ECO:0000318"/>
    <property type="project" value="GO_Central"/>
</dbReference>
<dbReference type="GO" id="GO:0043204">
    <property type="term" value="C:perikaryon"/>
    <property type="evidence" value="ECO:0000318"/>
    <property type="project" value="GO_Central"/>
</dbReference>
<dbReference type="GO" id="GO:0048471">
    <property type="term" value="C:perinuclear region of cytoplasm"/>
    <property type="evidence" value="ECO:0007669"/>
    <property type="project" value="UniProtKB-SubCell"/>
</dbReference>
<dbReference type="GO" id="GO:0005506">
    <property type="term" value="F:iron ion binding"/>
    <property type="evidence" value="ECO:0007669"/>
    <property type="project" value="InterPro"/>
</dbReference>
<dbReference type="GO" id="GO:0004511">
    <property type="term" value="F:tyrosine 3-monooxygenase activity"/>
    <property type="evidence" value="ECO:0000318"/>
    <property type="project" value="GO_Central"/>
</dbReference>
<dbReference type="GO" id="GO:0006585">
    <property type="term" value="P:dopamine biosynthetic process from tyrosine"/>
    <property type="evidence" value="ECO:0000318"/>
    <property type="project" value="GO_Central"/>
</dbReference>
<dbReference type="FunFam" id="1.10.800.10:FF:000004">
    <property type="entry name" value="Tyrosine 3-monooxygenase"/>
    <property type="match status" value="1"/>
</dbReference>
<dbReference type="Gene3D" id="1.10.800.10">
    <property type="entry name" value="Aromatic amino acid hydroxylase"/>
    <property type="match status" value="1"/>
</dbReference>
<dbReference type="InterPro" id="IPR001273">
    <property type="entry name" value="ArAA_hydroxylase"/>
</dbReference>
<dbReference type="InterPro" id="IPR018301">
    <property type="entry name" value="ArAA_hydroxylase_Fe/CU_BS"/>
</dbReference>
<dbReference type="InterPro" id="IPR036951">
    <property type="entry name" value="ArAA_hydroxylase_sf"/>
</dbReference>
<dbReference type="InterPro" id="IPR036329">
    <property type="entry name" value="Aro-AA_hydroxylase_C_sf"/>
</dbReference>
<dbReference type="InterPro" id="IPR019774">
    <property type="entry name" value="Aromatic-AA_hydroxylase_C"/>
</dbReference>
<dbReference type="InterPro" id="IPR019773">
    <property type="entry name" value="Tyrosine_3-monooxygenase-like"/>
</dbReference>
<dbReference type="PANTHER" id="PTHR11473">
    <property type="entry name" value="AROMATIC AMINO ACID HYDROXYLASE"/>
    <property type="match status" value="1"/>
</dbReference>
<dbReference type="PANTHER" id="PTHR11473:SF15">
    <property type="entry name" value="TYROSINE 3-MONOOXYGENASE"/>
    <property type="match status" value="1"/>
</dbReference>
<dbReference type="Pfam" id="PF00351">
    <property type="entry name" value="Biopterin_H"/>
    <property type="match status" value="1"/>
</dbReference>
<dbReference type="PIRSF" id="PIRSF000336">
    <property type="entry name" value="TH"/>
    <property type="match status" value="1"/>
</dbReference>
<dbReference type="PRINTS" id="PR00372">
    <property type="entry name" value="FYWHYDRXLASE"/>
</dbReference>
<dbReference type="SUPFAM" id="SSF56534">
    <property type="entry name" value="Aromatic aminoacid monoxygenases, catalytic and oligomerization domains"/>
    <property type="match status" value="1"/>
</dbReference>
<dbReference type="PROSITE" id="PS00367">
    <property type="entry name" value="BH4_AAA_HYDROXYL_1"/>
    <property type="match status" value="1"/>
</dbReference>
<dbReference type="PROSITE" id="PS51410">
    <property type="entry name" value="BH4_AAA_HYDROXYL_2"/>
    <property type="match status" value="1"/>
</dbReference>
<proteinExistence type="inferred from homology"/>
<feature type="chain" id="PRO_0000413532" description="Tyrosine 3-monooxygenase">
    <location>
        <begin position="1"/>
        <end position="517"/>
    </location>
</feature>
<feature type="binding site" evidence="1">
    <location>
        <position position="345"/>
    </location>
    <ligand>
        <name>Fe cation</name>
        <dbReference type="ChEBI" id="CHEBI:24875"/>
    </ligand>
</feature>
<feature type="binding site" evidence="1">
    <location>
        <position position="350"/>
    </location>
    <ligand>
        <name>Fe cation</name>
        <dbReference type="ChEBI" id="CHEBI:24875"/>
    </ligand>
</feature>
<feature type="binding site" evidence="1">
    <location>
        <position position="390"/>
    </location>
    <ligand>
        <name>Fe cation</name>
        <dbReference type="ChEBI" id="CHEBI:24875"/>
    </ligand>
</feature>
<feature type="modified residue" description="Phosphoserine; by PKA" evidence="4">
    <location>
        <position position="33"/>
    </location>
</feature>